<evidence type="ECO:0000255" key="1">
    <source>
        <dbReference type="HAMAP-Rule" id="MF_01347"/>
    </source>
</evidence>
<dbReference type="EC" id="7.1.2.2" evidence="1"/>
<dbReference type="EMBL" id="AF330160">
    <property type="protein sequence ID" value="AAG48363.1"/>
    <property type="molecule type" value="Genomic_DNA"/>
</dbReference>
<dbReference type="EMBL" id="CP001878">
    <property type="protein sequence ID" value="ADC49428.1"/>
    <property type="molecule type" value="Genomic_DNA"/>
</dbReference>
<dbReference type="RefSeq" id="WP_012960701.1">
    <property type="nucleotide sequence ID" value="NC_013791.2"/>
</dbReference>
<dbReference type="SMR" id="P22478"/>
<dbReference type="STRING" id="398511.BpOF4_06850"/>
<dbReference type="KEGG" id="bpf:BpOF4_06850"/>
<dbReference type="eggNOG" id="COG0055">
    <property type="taxonomic scope" value="Bacteria"/>
</dbReference>
<dbReference type="HOGENOM" id="CLU_022398_0_2_9"/>
<dbReference type="Proteomes" id="UP000001544">
    <property type="component" value="Chromosome"/>
</dbReference>
<dbReference type="GO" id="GO:0005886">
    <property type="term" value="C:plasma membrane"/>
    <property type="evidence" value="ECO:0007669"/>
    <property type="project" value="UniProtKB-SubCell"/>
</dbReference>
<dbReference type="GO" id="GO:0045259">
    <property type="term" value="C:proton-transporting ATP synthase complex"/>
    <property type="evidence" value="ECO:0007669"/>
    <property type="project" value="UniProtKB-KW"/>
</dbReference>
<dbReference type="GO" id="GO:0005524">
    <property type="term" value="F:ATP binding"/>
    <property type="evidence" value="ECO:0007669"/>
    <property type="project" value="UniProtKB-UniRule"/>
</dbReference>
<dbReference type="GO" id="GO:0016887">
    <property type="term" value="F:ATP hydrolysis activity"/>
    <property type="evidence" value="ECO:0007669"/>
    <property type="project" value="InterPro"/>
</dbReference>
<dbReference type="GO" id="GO:0046933">
    <property type="term" value="F:proton-transporting ATP synthase activity, rotational mechanism"/>
    <property type="evidence" value="ECO:0007669"/>
    <property type="project" value="UniProtKB-UniRule"/>
</dbReference>
<dbReference type="CDD" id="cd18110">
    <property type="entry name" value="ATP-synt_F1_beta_C"/>
    <property type="match status" value="1"/>
</dbReference>
<dbReference type="CDD" id="cd18115">
    <property type="entry name" value="ATP-synt_F1_beta_N"/>
    <property type="match status" value="1"/>
</dbReference>
<dbReference type="CDD" id="cd01133">
    <property type="entry name" value="F1-ATPase_beta_CD"/>
    <property type="match status" value="1"/>
</dbReference>
<dbReference type="FunFam" id="1.10.1140.10:FF:000001">
    <property type="entry name" value="ATP synthase subunit beta"/>
    <property type="match status" value="1"/>
</dbReference>
<dbReference type="FunFam" id="2.40.10.170:FF:000005">
    <property type="entry name" value="ATP synthase subunit beta"/>
    <property type="match status" value="1"/>
</dbReference>
<dbReference type="FunFam" id="3.40.50.300:FF:000004">
    <property type="entry name" value="ATP synthase subunit beta"/>
    <property type="match status" value="1"/>
</dbReference>
<dbReference type="Gene3D" id="2.40.10.170">
    <property type="match status" value="1"/>
</dbReference>
<dbReference type="Gene3D" id="1.10.1140.10">
    <property type="entry name" value="Bovine Mitochondrial F1-atpase, Atp Synthase Beta Chain, Chain D, domain 3"/>
    <property type="match status" value="1"/>
</dbReference>
<dbReference type="Gene3D" id="3.40.50.300">
    <property type="entry name" value="P-loop containing nucleotide triphosphate hydrolases"/>
    <property type="match status" value="1"/>
</dbReference>
<dbReference type="HAMAP" id="MF_01347">
    <property type="entry name" value="ATP_synth_beta_bact"/>
    <property type="match status" value="1"/>
</dbReference>
<dbReference type="InterPro" id="IPR003593">
    <property type="entry name" value="AAA+_ATPase"/>
</dbReference>
<dbReference type="InterPro" id="IPR055190">
    <property type="entry name" value="ATP-synt_VA_C"/>
</dbReference>
<dbReference type="InterPro" id="IPR005722">
    <property type="entry name" value="ATP_synth_F1_bsu"/>
</dbReference>
<dbReference type="InterPro" id="IPR020003">
    <property type="entry name" value="ATPase_a/bsu_AS"/>
</dbReference>
<dbReference type="InterPro" id="IPR050053">
    <property type="entry name" value="ATPase_alpha/beta_chains"/>
</dbReference>
<dbReference type="InterPro" id="IPR004100">
    <property type="entry name" value="ATPase_F1/V1/A1_a/bsu_N"/>
</dbReference>
<dbReference type="InterPro" id="IPR036121">
    <property type="entry name" value="ATPase_F1/V1/A1_a/bsu_N_sf"/>
</dbReference>
<dbReference type="InterPro" id="IPR000194">
    <property type="entry name" value="ATPase_F1/V1/A1_a/bsu_nucl-bd"/>
</dbReference>
<dbReference type="InterPro" id="IPR024034">
    <property type="entry name" value="ATPase_F1/V1_b/a_C"/>
</dbReference>
<dbReference type="InterPro" id="IPR027417">
    <property type="entry name" value="P-loop_NTPase"/>
</dbReference>
<dbReference type="NCBIfam" id="TIGR01039">
    <property type="entry name" value="atpD"/>
    <property type="match status" value="1"/>
</dbReference>
<dbReference type="PANTHER" id="PTHR15184">
    <property type="entry name" value="ATP SYNTHASE"/>
    <property type="match status" value="1"/>
</dbReference>
<dbReference type="PANTHER" id="PTHR15184:SF71">
    <property type="entry name" value="ATP SYNTHASE SUBUNIT BETA, MITOCHONDRIAL"/>
    <property type="match status" value="1"/>
</dbReference>
<dbReference type="Pfam" id="PF00006">
    <property type="entry name" value="ATP-synt_ab"/>
    <property type="match status" value="1"/>
</dbReference>
<dbReference type="Pfam" id="PF02874">
    <property type="entry name" value="ATP-synt_ab_N"/>
    <property type="match status" value="1"/>
</dbReference>
<dbReference type="Pfam" id="PF22919">
    <property type="entry name" value="ATP-synt_VA_C"/>
    <property type="match status" value="1"/>
</dbReference>
<dbReference type="SMART" id="SM00382">
    <property type="entry name" value="AAA"/>
    <property type="match status" value="1"/>
</dbReference>
<dbReference type="SUPFAM" id="SSF47917">
    <property type="entry name" value="C-terminal domain of alpha and beta subunits of F1 ATP synthase"/>
    <property type="match status" value="1"/>
</dbReference>
<dbReference type="SUPFAM" id="SSF50615">
    <property type="entry name" value="N-terminal domain of alpha and beta subunits of F1 ATP synthase"/>
    <property type="match status" value="1"/>
</dbReference>
<dbReference type="SUPFAM" id="SSF52540">
    <property type="entry name" value="P-loop containing nucleoside triphosphate hydrolases"/>
    <property type="match status" value="1"/>
</dbReference>
<dbReference type="PROSITE" id="PS00152">
    <property type="entry name" value="ATPASE_ALPHA_BETA"/>
    <property type="match status" value="1"/>
</dbReference>
<comment type="function">
    <text evidence="1">Produces ATP from ADP in the presence of a proton gradient across the membrane. The catalytic sites are hosted primarily by the beta subunits.</text>
</comment>
<comment type="catalytic activity">
    <reaction evidence="1">
        <text>ATP + H2O + 4 H(+)(in) = ADP + phosphate + 5 H(+)(out)</text>
        <dbReference type="Rhea" id="RHEA:57720"/>
        <dbReference type="ChEBI" id="CHEBI:15377"/>
        <dbReference type="ChEBI" id="CHEBI:15378"/>
        <dbReference type="ChEBI" id="CHEBI:30616"/>
        <dbReference type="ChEBI" id="CHEBI:43474"/>
        <dbReference type="ChEBI" id="CHEBI:456216"/>
        <dbReference type="EC" id="7.1.2.2"/>
    </reaction>
</comment>
<comment type="subunit">
    <text evidence="1">F-type ATPases have 2 components, CF(1) - the catalytic core - and CF(0) - the membrane proton channel. CF(1) has five subunits: alpha(3), beta(3), gamma(1), delta(1), epsilon(1). CF(0) has three main subunits: a(1), b(2) and c(9-12). The alpha and beta chains form an alternating ring which encloses part of the gamma chain. CF(1) is attached to CF(0) by a central stalk formed by the gamma and epsilon chains, while a peripheral stalk is formed by the delta and b chains.</text>
</comment>
<comment type="subcellular location">
    <subcellularLocation>
        <location evidence="1">Cell membrane</location>
        <topology evidence="1">Peripheral membrane protein</topology>
    </subcellularLocation>
</comment>
<comment type="similarity">
    <text evidence="1">Belongs to the ATPase alpha/beta chains family.</text>
</comment>
<accession>P22478</accession>
<accession>D3G0F3</accession>
<sequence>MNTGHITQVMGPVVDVKFKSGQLPEINNALKVVQVGADKNAVDVTVTLEVALHLGDDSVRTVAMGSTDGLVRGTEALDTGAPISVPVGEATLGRVFNVLGEAIDLGEPVAADVKRDPIHREAPKFEELSTTTEILETGIKVVDLLAPYIKGGKIGLFGGAGVGKTVLIQELINNIAQEHGGISVFAGVGERTREGNDLYHEMTDSGVIKKTAMVFGQMNEPPGARMRVALSGLTMAEHFRDRDGQDVLLFVDNIFRFTQAGSEVSALLGRMPSAVGYQPTLATEMGQLQERITSTKVGSVTSIQAIYVPADDYTDPAPATTFAHLDATTNLERKLSEMGIYPAVDPLASTSRALSPEIVGEEHYSVARQVQQTLQKYKELQDIIAILGMDELSEEDKLVVHRARRIQFFLSQNFHVAEQFTGQKGSYVPVKETIKGFKEILDGKYDDLPEDAFRLVGRIEEVIEKGKQMA</sequence>
<keyword id="KW-0066">ATP synthesis</keyword>
<keyword id="KW-0067">ATP-binding</keyword>
<keyword id="KW-1003">Cell membrane</keyword>
<keyword id="KW-0139">CF(1)</keyword>
<keyword id="KW-0375">Hydrogen ion transport</keyword>
<keyword id="KW-0406">Ion transport</keyword>
<keyword id="KW-0472">Membrane</keyword>
<keyword id="KW-0547">Nucleotide-binding</keyword>
<keyword id="KW-1185">Reference proteome</keyword>
<keyword id="KW-1278">Translocase</keyword>
<keyword id="KW-0813">Transport</keyword>
<protein>
    <recommendedName>
        <fullName evidence="1">ATP synthase subunit beta</fullName>
        <ecNumber evidence="1">7.1.2.2</ecNumber>
    </recommendedName>
    <alternativeName>
        <fullName evidence="1">ATP synthase F1 sector subunit beta</fullName>
    </alternativeName>
    <alternativeName>
        <fullName evidence="1">F-ATPase subunit beta</fullName>
    </alternativeName>
</protein>
<proteinExistence type="inferred from homology"/>
<feature type="chain" id="PRO_0000144423" description="ATP synthase subunit beta">
    <location>
        <begin position="1"/>
        <end position="470"/>
    </location>
</feature>
<feature type="binding site" evidence="1">
    <location>
        <begin position="158"/>
        <end position="165"/>
    </location>
    <ligand>
        <name>ATP</name>
        <dbReference type="ChEBI" id="CHEBI:30616"/>
    </ligand>
</feature>
<reference key="1">
    <citation type="journal article" date="1991" name="Mol. Gen. Genet.">
        <title>Organization and nucleotide sequence of the atp genes encoding the ATP synthase from alkaliphilic Bacillus firmus OF4.</title>
        <authorList>
            <person name="Ivey D.M."/>
            <person name="Krulwich T.A."/>
        </authorList>
    </citation>
    <scope>NUCLEOTIDE SEQUENCE [GENOMIC DNA]</scope>
</reference>
<reference key="2">
    <citation type="submission" date="2000-12" db="EMBL/GenBank/DDBJ databases">
        <authorList>
            <person name="Hicks D."/>
            <person name="Krulwich T.A."/>
        </authorList>
    </citation>
    <scope>SEQUENCE REVISION</scope>
</reference>
<reference key="3">
    <citation type="journal article" date="2011" name="Environ. Microbiol.">
        <title>Genome of alkaliphilic Bacillus pseudofirmus OF4 reveals adaptations that support the ability to grow in an external pH range from 7.5 to 11.4.</title>
        <authorList>
            <person name="Janto B."/>
            <person name="Ahmed A."/>
            <person name="Ito M."/>
            <person name="Liu J."/>
            <person name="Hicks D.B."/>
            <person name="Pagni S."/>
            <person name="Fackelmayer O.J."/>
            <person name="Smith T.A."/>
            <person name="Earl J."/>
            <person name="Elbourne L.D."/>
            <person name="Hassan K."/>
            <person name="Paulsen I.T."/>
            <person name="Kolsto A.B."/>
            <person name="Tourasse N.J."/>
            <person name="Ehrlich G.D."/>
            <person name="Boissy R."/>
            <person name="Ivey D.M."/>
            <person name="Li G."/>
            <person name="Xue Y."/>
            <person name="Ma Y."/>
            <person name="Hu F.Z."/>
            <person name="Krulwich T.A."/>
        </authorList>
    </citation>
    <scope>NUCLEOTIDE SEQUENCE [LARGE SCALE GENOMIC DNA]</scope>
    <source>
        <strain>ATCC BAA-2126 / JCM 17055 / OF4</strain>
    </source>
</reference>
<gene>
    <name evidence="1" type="primary">atpD</name>
    <name type="ordered locus">BpOF4_06850</name>
</gene>
<organism>
    <name type="scientific">Alkalihalophilus pseudofirmus (strain ATCC BAA-2126 / JCM 17055 / OF4)</name>
    <name type="common">Bacillus pseudofirmus</name>
    <dbReference type="NCBI Taxonomy" id="398511"/>
    <lineage>
        <taxon>Bacteria</taxon>
        <taxon>Bacillati</taxon>
        <taxon>Bacillota</taxon>
        <taxon>Bacilli</taxon>
        <taxon>Bacillales</taxon>
        <taxon>Bacillaceae</taxon>
        <taxon>Alkalihalophilus</taxon>
    </lineage>
</organism>
<name>ATPB_ALKPO</name>